<organism>
    <name type="scientific">Homo sapiens</name>
    <name type="common">Human</name>
    <dbReference type="NCBI Taxonomy" id="9606"/>
    <lineage>
        <taxon>Eukaryota</taxon>
        <taxon>Metazoa</taxon>
        <taxon>Chordata</taxon>
        <taxon>Craniata</taxon>
        <taxon>Vertebrata</taxon>
        <taxon>Euteleostomi</taxon>
        <taxon>Mammalia</taxon>
        <taxon>Eutheria</taxon>
        <taxon>Euarchontoglires</taxon>
        <taxon>Primates</taxon>
        <taxon>Haplorrhini</taxon>
        <taxon>Catarrhini</taxon>
        <taxon>Hominidae</taxon>
        <taxon>Homo</taxon>
    </lineage>
</organism>
<feature type="initiator methionine" description="Removed" evidence="4 12">
    <location>
        <position position="1"/>
    </location>
</feature>
<feature type="chain" id="PRO_0000160759" description="Alcohol dehydrogenase class-3">
    <location>
        <begin position="2"/>
        <end position="374"/>
    </location>
</feature>
<feature type="binding site" evidence="4">
    <location>
        <position position="45"/>
    </location>
    <ligand>
        <name>Zn(2+)</name>
        <dbReference type="ChEBI" id="CHEBI:29105"/>
        <label>1</label>
        <note>catalytic</note>
    </ligand>
</feature>
<feature type="binding site" evidence="4">
    <location>
        <position position="67"/>
    </location>
    <ligand>
        <name>Zn(2+)</name>
        <dbReference type="ChEBI" id="CHEBI:29105"/>
        <label>1</label>
        <note>catalytic</note>
    </ligand>
</feature>
<feature type="binding site" evidence="4">
    <location>
        <position position="97"/>
    </location>
    <ligand>
        <name>Zn(2+)</name>
        <dbReference type="ChEBI" id="CHEBI:29105"/>
        <label>2</label>
    </ligand>
</feature>
<feature type="binding site" evidence="4">
    <location>
        <position position="100"/>
    </location>
    <ligand>
        <name>Zn(2+)</name>
        <dbReference type="ChEBI" id="CHEBI:29105"/>
        <label>2</label>
    </ligand>
</feature>
<feature type="binding site" evidence="4">
    <location>
        <position position="103"/>
    </location>
    <ligand>
        <name>Zn(2+)</name>
        <dbReference type="ChEBI" id="CHEBI:29105"/>
        <label>2</label>
    </ligand>
</feature>
<feature type="binding site" evidence="4">
    <location>
        <position position="111"/>
    </location>
    <ligand>
        <name>Zn(2+)</name>
        <dbReference type="ChEBI" id="CHEBI:29105"/>
        <label>2</label>
    </ligand>
</feature>
<feature type="binding site" evidence="4">
    <location>
        <position position="174"/>
    </location>
    <ligand>
        <name>Zn(2+)</name>
        <dbReference type="ChEBI" id="CHEBI:29105"/>
        <label>1</label>
        <note>catalytic</note>
    </ligand>
</feature>
<feature type="site" description="Important for FDH activity and activation by fatty acids" evidence="5 6">
    <location>
        <position position="115"/>
    </location>
</feature>
<feature type="modified residue" description="N-acetylalanine" evidence="12">
    <location>
        <position position="2"/>
    </location>
</feature>
<feature type="modified residue" description="N6-succinyllysine" evidence="1">
    <location>
        <position position="233"/>
    </location>
</feature>
<feature type="modified residue" description="Phosphoserine" evidence="14">
    <location>
        <position position="247"/>
    </location>
</feature>
<feature type="modified residue" description="N6-succinyllysine" evidence="1">
    <location>
        <position position="315"/>
    </location>
</feature>
<feature type="modified residue" description="Phosphoserine" evidence="13">
    <location>
        <position position="324"/>
    </location>
</feature>
<feature type="modified residue" description="Phosphoserine" evidence="13">
    <location>
        <position position="351"/>
    </location>
</feature>
<feature type="sequence variant" id="VAR_025823" description="In dbSNP:rs28730623." evidence="8">
    <original>L</original>
    <variation>S</variation>
    <location>
        <position position="163"/>
    </location>
</feature>
<feature type="sequence variant" id="VAR_086835" description="In AMEDS; dbSNP:rs754853545." evidence="3">
    <original>A</original>
    <variation>P</variation>
    <location>
        <position position="278"/>
    </location>
</feature>
<feature type="sequence variant" id="VAR_025824" description="In dbSNP:rs28730628." evidence="8">
    <original>V</original>
    <variation>I</variation>
    <location>
        <position position="309"/>
    </location>
</feature>
<feature type="sequence variant" id="VAR_048199" description="In dbSNP:rs16996593.">
    <original>D</original>
    <variation>E</variation>
    <location>
        <position position="353"/>
    </location>
</feature>
<feature type="mutagenesis site" description="Loss of FDH activity and loss of activation by fatty acids." evidence="5 6">
    <original>R</original>
    <variation>A</variation>
    <variation>D</variation>
    <location>
        <position position="115"/>
    </location>
</feature>
<feature type="sequence conflict" description="In Ref. 2; AAA51597." evidence="9" ref="2">
    <original>D</original>
    <variation>Y</variation>
    <location>
        <position position="167"/>
    </location>
</feature>
<feature type="sequence conflict" description="In Ref. 2; AAA51597." evidence="9" ref="2">
    <original>F</original>
    <variation>L</variation>
    <location>
        <position position="246"/>
    </location>
</feature>
<feature type="strand" evidence="15">
    <location>
        <begin position="6"/>
        <end position="13"/>
    </location>
</feature>
<feature type="strand" evidence="15">
    <location>
        <begin position="21"/>
        <end position="27"/>
    </location>
</feature>
<feature type="strand" evidence="15">
    <location>
        <begin position="34"/>
        <end position="43"/>
    </location>
</feature>
<feature type="helix" evidence="15">
    <location>
        <begin position="46"/>
        <end position="52"/>
    </location>
</feature>
<feature type="strand" evidence="15">
    <location>
        <begin position="61"/>
        <end position="63"/>
    </location>
</feature>
<feature type="strand" evidence="15">
    <location>
        <begin position="68"/>
        <end position="76"/>
    </location>
</feature>
<feature type="strand" evidence="15">
    <location>
        <begin position="88"/>
        <end position="91"/>
    </location>
</feature>
<feature type="strand" evidence="16">
    <location>
        <begin position="98"/>
        <end position="100"/>
    </location>
</feature>
<feature type="helix" evidence="15">
    <location>
        <begin position="101"/>
        <end position="104"/>
    </location>
</feature>
<feature type="helix" evidence="15">
    <location>
        <begin position="115"/>
        <end position="119"/>
    </location>
</feature>
<feature type="strand" evidence="15">
    <location>
        <begin position="129"/>
        <end position="132"/>
    </location>
</feature>
<feature type="strand" evidence="15">
    <location>
        <begin position="135"/>
        <end position="138"/>
    </location>
</feature>
<feature type="turn" evidence="15">
    <location>
        <begin position="141"/>
        <end position="143"/>
    </location>
</feature>
<feature type="strand" evidence="15">
    <location>
        <begin position="146"/>
        <end position="153"/>
    </location>
</feature>
<feature type="helix" evidence="15">
    <location>
        <begin position="154"/>
        <end position="156"/>
    </location>
</feature>
<feature type="strand" evidence="15">
    <location>
        <begin position="157"/>
        <end position="159"/>
    </location>
</feature>
<feature type="helix" evidence="15">
    <location>
        <begin position="166"/>
        <end position="169"/>
    </location>
</feature>
<feature type="helix" evidence="15">
    <location>
        <begin position="170"/>
        <end position="173"/>
    </location>
</feature>
<feature type="helix" evidence="15">
    <location>
        <begin position="175"/>
        <end position="184"/>
    </location>
</feature>
<feature type="turn" evidence="15">
    <location>
        <begin position="185"/>
        <end position="187"/>
    </location>
</feature>
<feature type="strand" evidence="15">
    <location>
        <begin position="194"/>
        <end position="198"/>
    </location>
</feature>
<feature type="helix" evidence="15">
    <location>
        <begin position="202"/>
        <end position="214"/>
    </location>
</feature>
<feature type="strand" evidence="15">
    <location>
        <begin position="217"/>
        <end position="222"/>
    </location>
</feature>
<feature type="helix" evidence="15">
    <location>
        <begin position="226"/>
        <end position="228"/>
    </location>
</feature>
<feature type="helix" evidence="15">
    <location>
        <begin position="229"/>
        <end position="235"/>
    </location>
</feature>
<feature type="strand" evidence="15">
    <location>
        <begin position="238"/>
        <end position="241"/>
    </location>
</feature>
<feature type="helix" evidence="15">
    <location>
        <begin position="243"/>
        <end position="245"/>
    </location>
</feature>
<feature type="helix" evidence="15">
    <location>
        <begin position="250"/>
        <end position="257"/>
    </location>
</feature>
<feature type="strand" evidence="15">
    <location>
        <begin position="262"/>
        <end position="267"/>
    </location>
</feature>
<feature type="helix" evidence="15">
    <location>
        <begin position="272"/>
        <end position="280"/>
    </location>
</feature>
<feature type="turn" evidence="15">
    <location>
        <begin position="284"/>
        <end position="286"/>
    </location>
</feature>
<feature type="strand" evidence="15">
    <location>
        <begin position="288"/>
        <end position="291"/>
    </location>
</feature>
<feature type="strand" evidence="15">
    <location>
        <begin position="301"/>
        <end position="303"/>
    </location>
</feature>
<feature type="helix" evidence="15">
    <location>
        <begin position="306"/>
        <end position="309"/>
    </location>
</feature>
<feature type="strand" evidence="15">
    <location>
        <begin position="313"/>
        <end position="316"/>
    </location>
</feature>
<feature type="helix" evidence="15">
    <location>
        <begin position="319"/>
        <end position="321"/>
    </location>
</feature>
<feature type="helix" evidence="15">
    <location>
        <begin position="324"/>
        <end position="336"/>
    </location>
</feature>
<feature type="helix" evidence="15">
    <location>
        <begin position="343"/>
        <end position="345"/>
    </location>
</feature>
<feature type="strand" evidence="15">
    <location>
        <begin position="346"/>
        <end position="351"/>
    </location>
</feature>
<feature type="helix" evidence="15">
    <location>
        <begin position="352"/>
        <end position="354"/>
    </location>
</feature>
<feature type="helix" evidence="15">
    <location>
        <begin position="355"/>
        <end position="363"/>
    </location>
</feature>
<feature type="strand" evidence="15">
    <location>
        <begin position="368"/>
        <end position="373"/>
    </location>
</feature>
<reference key="1">
    <citation type="journal article" date="1989" name="Biochem. Biophys. Res. Commun.">
        <title>cDNA sequence of human class III alcohol dehydrogenase.</title>
        <authorList>
            <person name="Sharma C.P."/>
            <person name="Fox E.A."/>
            <person name="Holmquist B."/>
            <person name="Joernvall H."/>
            <person name="Vallee B.L."/>
        </authorList>
    </citation>
    <scope>NUCLEOTIDE SEQUENCE [MRNA]</scope>
</reference>
<reference key="2">
    <citation type="journal article" date="1989" name="Biochem. Biophys. Res. Commun.">
        <title>Cloning and comparative mapping of a human class III (chi) alcohol dehydrogenase cDNA.</title>
        <authorList>
            <person name="Giri P.R."/>
            <person name="Krug J.F."/>
            <person name="Kozak C."/>
            <person name="Moretti T."/>
            <person name="O'Brien S.J."/>
            <person name="Seuanez H.N."/>
            <person name="Goldman D."/>
        </authorList>
    </citation>
    <scope>NUCLEOTIDE SEQUENCE [MRNA]</scope>
</reference>
<reference key="3">
    <citation type="journal article" date="1992" name="Gene">
        <title>Cloning and characterization of the ADH5 gene encoding human alcohol dehydrogenase 5, formaldehyde dehydrogenase.</title>
        <authorList>
            <person name="Hur M.W."/>
            <person name="Edenberg H.J."/>
        </authorList>
    </citation>
    <scope>NUCLEOTIDE SEQUENCE [GENOMIC DNA]</scope>
</reference>
<reference key="4">
    <citation type="submission" date="2004-06" db="EMBL/GenBank/DDBJ databases">
        <title>Cloning of human full open reading frames in Gateway(TM) system entry vector (pDONR201).</title>
        <authorList>
            <person name="Halleck A."/>
            <person name="Ebert L."/>
            <person name="Mkoundinya M."/>
            <person name="Schick M."/>
            <person name="Eisenstein S."/>
            <person name="Neubert P."/>
            <person name="Kstrang K."/>
            <person name="Schatten R."/>
            <person name="Shen B."/>
            <person name="Henze S."/>
            <person name="Mar W."/>
            <person name="Korn B."/>
            <person name="Zuo D."/>
            <person name="Hu Y."/>
            <person name="LaBaer J."/>
        </authorList>
    </citation>
    <scope>NUCLEOTIDE SEQUENCE [LARGE SCALE MRNA]</scope>
</reference>
<reference key="5">
    <citation type="submission" date="2004-10" db="EMBL/GenBank/DDBJ databases">
        <title>Cloning of human full-length CDSs in BD Creator(TM) system donor vector.</title>
        <authorList>
            <person name="Kalnine N."/>
            <person name="Chen X."/>
            <person name="Rolfs A."/>
            <person name="Halleck A."/>
            <person name="Hines L."/>
            <person name="Eisenstein S."/>
            <person name="Koundinya M."/>
            <person name="Raphael J."/>
            <person name="Moreira D."/>
            <person name="Kelley T."/>
            <person name="LaBaer J."/>
            <person name="Lin Y."/>
            <person name="Phelan M."/>
            <person name="Farmer A."/>
        </authorList>
    </citation>
    <scope>NUCLEOTIDE SEQUENCE [LARGE SCALE MRNA]</scope>
</reference>
<reference key="6">
    <citation type="submission" date="2005-03" db="EMBL/GenBank/DDBJ databases">
        <authorList>
            <consortium name="NIEHS SNPs program"/>
        </authorList>
    </citation>
    <scope>NUCLEOTIDE SEQUENCE [GENOMIC DNA]</scope>
    <scope>VARIANTS SER-163 AND ILE-309</scope>
</reference>
<reference key="7">
    <citation type="journal article" date="2004" name="Genome Res.">
        <title>The status, quality, and expansion of the NIH full-length cDNA project: the Mammalian Gene Collection (MGC).</title>
        <authorList>
            <consortium name="The MGC Project Team"/>
        </authorList>
    </citation>
    <scope>NUCLEOTIDE SEQUENCE [LARGE SCALE MRNA]</scope>
    <source>
        <tissue>B-cell</tissue>
    </source>
</reference>
<reference key="8">
    <citation type="journal article" date="1988" name="Biochemistry">
        <title>Class III human liver alcohol dehydrogenase: a novel structural type equidistantly related to the class I and class II enzymes.</title>
        <authorList>
            <person name="Kaiser R."/>
            <person name="Holmquist B."/>
            <person name="Hempel J."/>
            <person name="Vallee B.L."/>
            <person name="Joernvall H."/>
        </authorList>
    </citation>
    <scope>PROTEIN SEQUENCE OF 2-374</scope>
    <scope>COFACTOR</scope>
    <source>
        <tissue>Liver</tissue>
    </source>
</reference>
<reference key="9">
    <citation type="journal article" date="1993" name="Biochemistry">
        <title>Role of arginine 115 in fatty acid activation and formaldehyde dehydrogenase activity of human class III alcohol dehydrogenase.</title>
        <authorList>
            <person name="Holmquist B."/>
            <person name="Moulis J.-M."/>
            <person name="Engeland K."/>
            <person name="Vallee B.L."/>
        </authorList>
    </citation>
    <scope>PARTIAL PROTEIN SEQUENCE</scope>
    <scope>MUTAGENESIS OF ARG-115</scope>
</reference>
<reference key="10">
    <citation type="journal article" date="1993" name="Proc. Natl. Acad. Sci. U.S.A.">
        <title>Mutation of Arg-115 of human class III alcohol dehydrogenase: a binding site required for formaldehyde dehydrogenase activity and fatty acid activation.</title>
        <authorList>
            <person name="Engeland K."/>
            <person name="Hoeoeg J.-O."/>
            <person name="Holmquist B."/>
            <person name="Estonius M."/>
            <person name="Joernvall H."/>
            <person name="Vallee B.L."/>
        </authorList>
    </citation>
    <scope>FUNCTION</scope>
    <scope>CATALYTIC ACTIVITY</scope>
    <scope>MUTAGENESIS OF ARG-115</scope>
</reference>
<reference key="11">
    <citation type="journal article" date="2005" name="J. Biol. Chem.">
        <title>Omega-oxidation of 20-hydroxyeicosatetraenoic acid (20-HETE) in cerebral microvascular smooth muscle and endothelium by alcohol dehydrogenase 4.</title>
        <authorList>
            <person name="Collins X.H."/>
            <person name="Harmon S.D."/>
            <person name="Kaduce T.L."/>
            <person name="Berst K.B."/>
            <person name="Fang X."/>
            <person name="Moore S.A."/>
            <person name="Raju T.V."/>
            <person name="Falck J.R."/>
            <person name="Weintraub N.L."/>
            <person name="Duester G."/>
            <person name="Plapp B.V."/>
            <person name="Spector A.A."/>
        </authorList>
    </citation>
    <scope>CATALYTIC ACTIVITY</scope>
    <scope>FUNCTION</scope>
    <scope>BIOPHYSICOCHEMICAL PROPERTIES</scope>
</reference>
<reference key="12">
    <citation type="journal article" date="2009" name="Anal. Chem.">
        <title>Lys-N and trypsin cover complementary parts of the phosphoproteome in a refined SCX-based approach.</title>
        <authorList>
            <person name="Gauci S."/>
            <person name="Helbig A.O."/>
            <person name="Slijper M."/>
            <person name="Krijgsveld J."/>
            <person name="Heck A.J."/>
            <person name="Mohammed S."/>
        </authorList>
    </citation>
    <scope>ACETYLATION [LARGE SCALE ANALYSIS] AT ALA-2</scope>
    <scope>CLEAVAGE OF INITIATOR METHIONINE [LARGE SCALE ANALYSIS]</scope>
    <scope>IDENTIFICATION BY MASS SPECTROMETRY [LARGE SCALE ANALYSIS]</scope>
</reference>
<reference key="13">
    <citation type="journal article" date="2011" name="BMC Syst. Biol.">
        <title>Initial characterization of the human central proteome.</title>
        <authorList>
            <person name="Burkard T.R."/>
            <person name="Planyavsky M."/>
            <person name="Kaupe I."/>
            <person name="Breitwieser F.P."/>
            <person name="Buerckstuemmer T."/>
            <person name="Bennett K.L."/>
            <person name="Superti-Furga G."/>
            <person name="Colinge J."/>
        </authorList>
    </citation>
    <scope>IDENTIFICATION BY MASS SPECTROMETRY [LARGE SCALE ANALYSIS]</scope>
</reference>
<reference key="14">
    <citation type="journal article" date="2013" name="J. Proteome Res.">
        <title>Toward a comprehensive characterization of a human cancer cell phosphoproteome.</title>
        <authorList>
            <person name="Zhou H."/>
            <person name="Di Palma S."/>
            <person name="Preisinger C."/>
            <person name="Peng M."/>
            <person name="Polat A.N."/>
            <person name="Heck A.J."/>
            <person name="Mohammed S."/>
        </authorList>
    </citation>
    <scope>PHOSPHORYLATION [LARGE SCALE ANALYSIS] AT SER-324 AND SER-351</scope>
    <scope>IDENTIFICATION BY MASS SPECTROMETRY [LARGE SCALE ANALYSIS]</scope>
    <source>
        <tissue>Erythroleukemia</tissue>
    </source>
</reference>
<reference key="15">
    <citation type="journal article" date="2014" name="J. Proteomics">
        <title>An enzyme assisted RP-RPLC approach for in-depth analysis of human liver phosphoproteome.</title>
        <authorList>
            <person name="Bian Y."/>
            <person name="Song C."/>
            <person name="Cheng K."/>
            <person name="Dong M."/>
            <person name="Wang F."/>
            <person name="Huang J."/>
            <person name="Sun D."/>
            <person name="Wang L."/>
            <person name="Ye M."/>
            <person name="Zou H."/>
        </authorList>
    </citation>
    <scope>PHOSPHORYLATION [LARGE SCALE ANALYSIS] AT SER-247</scope>
    <scope>IDENTIFICATION BY MASS SPECTROMETRY [LARGE SCALE ANALYSIS]</scope>
    <source>
        <tissue>Liver</tissue>
    </source>
</reference>
<reference key="16">
    <citation type="journal article" date="1997" name="J. Mol. Biol.">
        <title>Structure of human chi chi alcohol dehydrogenase: a glutathione-dependent formaldehyde dehydrogenase.</title>
        <authorList>
            <person name="Yang Z.-N."/>
            <person name="Bosron W.F."/>
            <person name="Hurley T.D."/>
        </authorList>
    </citation>
    <scope>X-RAY CRYSTALLOGRAPHY (2.7 ANGSTROMS)</scope>
    <scope>SUBUNIT</scope>
</reference>
<reference key="17">
    <citation type="journal article" date="2020" name="Sci. Adv.">
        <title>Digenic mutations in ALDH2 and ADH5 impair formaldehyde clearance and cause a multisystem disorder, AMeD syndrome.</title>
        <authorList>
            <person name="Oka Y."/>
            <person name="Hamada M."/>
            <person name="Nakazawa Y."/>
            <person name="Muramatsu H."/>
            <person name="Okuno Y."/>
            <person name="Higasa K."/>
            <person name="Shimada M."/>
            <person name="Takeshima H."/>
            <person name="Hanada K."/>
            <person name="Hirano T."/>
            <person name="Kawakita T."/>
            <person name="Sakaguchi H."/>
            <person name="Ichimura T."/>
            <person name="Ozono S."/>
            <person name="Yuge K."/>
            <person name="Watanabe Y."/>
            <person name="Kotani Y."/>
            <person name="Yamane M."/>
            <person name="Kasugai Y."/>
            <person name="Tanaka M."/>
            <person name="Suganami T."/>
            <person name="Nakada S."/>
            <person name="Mitsutake N."/>
            <person name="Hara Y."/>
            <person name="Kato K."/>
            <person name="Mizuno S."/>
            <person name="Miyake N."/>
            <person name="Kawai Y."/>
            <person name="Tokunaga K."/>
            <person name="Nagasaki M."/>
            <person name="Kito S."/>
            <person name="Isoyama K."/>
            <person name="Onodera M."/>
            <person name="Kaneko H."/>
            <person name="Matsumoto N."/>
            <person name="Matsuda F."/>
            <person name="Matsuo K."/>
            <person name="Takahashi Y."/>
            <person name="Mashimo T."/>
            <person name="Kojima S."/>
            <person name="Ogi T."/>
        </authorList>
    </citation>
    <scope>VARIANT AMEDS PRO-278</scope>
    <scope>INVOLVEMENT IN AMEDS</scope>
    <scope>FUNCTION</scope>
</reference>
<sequence length="374" mass="39724">MANEVIKCKAAVAWEAGKPLSIEEIEVAPPKAHEVRIKIIATAVCHTDAYTLSGADPEGCFPVILGHEGAGIVESVGEGVTKLKAGDTVIPLYIPQCGECKFCLNPKTNLCQKIRVTQGKGLMPDGTSRFTCKGKTILHYMGTSTFSEYTVVADISVAKIDPLAPLDKVCLLGCGISTGYGAAVNTAKLEPGSVCAVFGLGGVGLAVIMGCKVAGASRIIGVDINKDKFARAKEFGATECINPQDFSKPIQEVLIEMTDGGVDYSFECIGNVKVMRAALEACHKGWGVSVVVGVAASGEEIATRPFQLVTGRTWKGTAFGGWKSVESVPKLVSEYMSKKIKVDEFVTHNLSFDEINKAFELMHSGKSIRTVVKI</sequence>
<comment type="function">
    <text evidence="1 2 3 5">Catalyzes the oxidation of long-chain primary alcohols and the oxidation of S-(hydroxymethyl) glutathione (PubMed:8460164). Also oxidizes long chain omega-hydroxy fatty acids, such as 20-HETE, producing both the intermediate aldehyde, 20-oxoarachidonate and the end product, a dicarboxylic acid, (5Z,8Z,11Z,14Z)-eicosatetraenedioate (PubMed:16081420). Class-III ADH is remarkably ineffective in oxidizing ethanol (PubMed:8460164). Required for clearance of cellular formaldehyde, a cytotoxic and carcinogenic metabolite that induces DNA damage (PubMed:33355142). Also acts as a S-nitroso-glutathione reductase by catalyzing the NADH-dependent reduction of S-nitrosoglutathione, thereby regulating protein S-nitrosylation (By similarity).</text>
</comment>
<comment type="catalytic activity">
    <reaction evidence="5">
        <text>a primary alcohol + NAD(+) = an aldehyde + NADH + H(+)</text>
        <dbReference type="Rhea" id="RHEA:10736"/>
        <dbReference type="ChEBI" id="CHEBI:15378"/>
        <dbReference type="ChEBI" id="CHEBI:15734"/>
        <dbReference type="ChEBI" id="CHEBI:17478"/>
        <dbReference type="ChEBI" id="CHEBI:57540"/>
        <dbReference type="ChEBI" id="CHEBI:57945"/>
        <dbReference type="EC" id="1.1.1.1"/>
    </reaction>
</comment>
<comment type="catalytic activity">
    <reaction evidence="5">
        <text>a secondary alcohol + NAD(+) = a ketone + NADH + H(+)</text>
        <dbReference type="Rhea" id="RHEA:10740"/>
        <dbReference type="ChEBI" id="CHEBI:15378"/>
        <dbReference type="ChEBI" id="CHEBI:17087"/>
        <dbReference type="ChEBI" id="CHEBI:35681"/>
        <dbReference type="ChEBI" id="CHEBI:57540"/>
        <dbReference type="ChEBI" id="CHEBI:57945"/>
        <dbReference type="EC" id="1.1.1.1"/>
    </reaction>
</comment>
<comment type="catalytic activity">
    <reaction evidence="5">
        <text>S-(hydroxymethyl)glutathione + NADP(+) = S-formylglutathione + NADPH + H(+)</text>
        <dbReference type="Rhea" id="RHEA:19981"/>
        <dbReference type="ChEBI" id="CHEBI:15378"/>
        <dbReference type="ChEBI" id="CHEBI:57688"/>
        <dbReference type="ChEBI" id="CHEBI:57783"/>
        <dbReference type="ChEBI" id="CHEBI:58349"/>
        <dbReference type="ChEBI" id="CHEBI:58758"/>
        <dbReference type="EC" id="1.1.1.284"/>
    </reaction>
</comment>
<comment type="catalytic activity">
    <reaction evidence="5">
        <text>S-(hydroxymethyl)glutathione + NAD(+) = S-formylglutathione + NADH + H(+)</text>
        <dbReference type="Rhea" id="RHEA:19985"/>
        <dbReference type="ChEBI" id="CHEBI:15378"/>
        <dbReference type="ChEBI" id="CHEBI:57540"/>
        <dbReference type="ChEBI" id="CHEBI:57688"/>
        <dbReference type="ChEBI" id="CHEBI:57945"/>
        <dbReference type="ChEBI" id="CHEBI:58758"/>
        <dbReference type="EC" id="1.1.1.284"/>
    </reaction>
</comment>
<comment type="catalytic activity">
    <reaction evidence="2">
        <text>20-oxo-(5Z,8Z,11Z,14Z)-eicosatetraenoate + NAD(+) + H2O = (5Z,8Z,11Z,14Z)-eicosatetraenedioate + NADH + 2 H(+)</text>
        <dbReference type="Rhea" id="RHEA:39803"/>
        <dbReference type="ChEBI" id="CHEBI:15377"/>
        <dbReference type="ChEBI" id="CHEBI:15378"/>
        <dbReference type="ChEBI" id="CHEBI:57540"/>
        <dbReference type="ChEBI" id="CHEBI:57945"/>
        <dbReference type="ChEBI" id="CHEBI:76645"/>
        <dbReference type="ChEBI" id="CHEBI:76647"/>
    </reaction>
    <physiologicalReaction direction="left-to-right" evidence="10">
        <dbReference type="Rhea" id="RHEA:39804"/>
    </physiologicalReaction>
</comment>
<comment type="catalytic activity">
    <reaction evidence="2">
        <text>20-hydroxy-(5Z,8Z,11Z,14Z)-eicosatetraenoate + NAD(+) = 20-oxo-(5Z,8Z,11Z,14Z)-eicosatetraenoate + NADH + H(+)</text>
        <dbReference type="Rhea" id="RHEA:39799"/>
        <dbReference type="ChEBI" id="CHEBI:15378"/>
        <dbReference type="ChEBI" id="CHEBI:57540"/>
        <dbReference type="ChEBI" id="CHEBI:57945"/>
        <dbReference type="ChEBI" id="CHEBI:76624"/>
        <dbReference type="ChEBI" id="CHEBI:76645"/>
    </reaction>
    <physiologicalReaction direction="left-to-right" evidence="10">
        <dbReference type="Rhea" id="RHEA:39800"/>
    </physiologicalReaction>
</comment>
<comment type="catalytic activity">
    <reaction evidence="1">
        <text>S-nitrosoglutathione + NADH + H(+) = S-(hydroxysulfenamide)glutathione + NAD(+)</text>
        <dbReference type="Rhea" id="RHEA:78371"/>
        <dbReference type="ChEBI" id="CHEBI:15378"/>
        <dbReference type="ChEBI" id="CHEBI:57540"/>
        <dbReference type="ChEBI" id="CHEBI:57945"/>
        <dbReference type="ChEBI" id="CHEBI:145544"/>
        <dbReference type="ChEBI" id="CHEBI:229723"/>
    </reaction>
    <physiologicalReaction direction="left-to-right" evidence="1">
        <dbReference type="Rhea" id="RHEA:78372"/>
    </physiologicalReaction>
</comment>
<comment type="cofactor">
    <cofactor evidence="4">
        <name>Zn(2+)</name>
        <dbReference type="ChEBI" id="CHEBI:29105"/>
    </cofactor>
    <text evidence="4">Binds 2 Zn(2+) ions per subunit.</text>
</comment>
<comment type="biophysicochemical properties">
    <kinetics>
        <KM evidence="2">21 uM for 20-HETE</KM>
    </kinetics>
</comment>
<comment type="subunit">
    <text evidence="7">Homodimer.</text>
</comment>
<comment type="subcellular location">
    <subcellularLocation>
        <location evidence="9">Cytoplasm</location>
    </subcellularLocation>
</comment>
<comment type="disease" evidence="3">
    <disease id="DI-06008">
        <name>AMED syndrome, digenic</name>
        <acronym>AMEDS</acronym>
        <description>A form of bone marrow failure syndrome, a heterogeneous group of life-threatening disorders characterized by hematopoietic defects in association with a range of variable extra-hematopoietic manifestations. AMEDS is an autosomal recessive, digenic form characterized by childhood onset of bone marrow failure resulting in aplastic anemia, in association with global developmental delay, intellectual disability, and poor overall growth with short stature.</description>
        <dbReference type="MIM" id="619151"/>
    </disease>
    <text evidence="3">The disease is caused by variants affecting distinct genetic loci, including the gene represented in this entry. AMEDS patients carry ADH5 biallelic variants and homozygous or heterozygous ALDH2 variant p.Glu504Lys, affecting protein activity. Cellular and animal studies demonstrate that the simultaneous loss of ALDH2 and ADH5 activities leads to an increase of cellular formaldehyde sensitivity and multisystem abnormalities including hematopoietic failure.</text>
</comment>
<comment type="miscellaneous">
    <text>There are 7 different ADH's isozymes in human: three belongs to class-I: alpha, beta, and gamma, one to class-II: pi, one to class-III: chi, one to class-IV: ADH7 and one to class-V: ADH6.</text>
</comment>
<comment type="similarity">
    <text evidence="9">Belongs to the zinc-containing alcohol dehydrogenase family. Class-III subfamily.</text>
</comment>
<accession>P11766</accession>
<accession>Q6FHR2</accession>
<dbReference type="EC" id="1.1.1.1" evidence="5"/>
<dbReference type="EC" id="1.1.1.-"/>
<dbReference type="EC" id="1.1.1.284" evidence="5"/>
<dbReference type="EMBL" id="M30471">
    <property type="protein sequence ID" value="AAA79018.1"/>
    <property type="molecule type" value="mRNA"/>
</dbReference>
<dbReference type="EMBL" id="M29872">
    <property type="protein sequence ID" value="AAA51597.1"/>
    <property type="molecule type" value="mRNA"/>
</dbReference>
<dbReference type="EMBL" id="M81118">
    <property type="protein sequence ID" value="AAA51596.1"/>
    <property type="molecule type" value="Genomic_DNA"/>
</dbReference>
<dbReference type="EMBL" id="M81112">
    <property type="protein sequence ID" value="AAA51596.1"/>
    <property type="status" value="JOINED"/>
    <property type="molecule type" value="Genomic_DNA"/>
</dbReference>
<dbReference type="EMBL" id="M81113">
    <property type="protein sequence ID" value="AAA51596.1"/>
    <property type="status" value="JOINED"/>
    <property type="molecule type" value="Genomic_DNA"/>
</dbReference>
<dbReference type="EMBL" id="M81114">
    <property type="protein sequence ID" value="AAA51596.1"/>
    <property type="status" value="JOINED"/>
    <property type="molecule type" value="Genomic_DNA"/>
</dbReference>
<dbReference type="EMBL" id="M81115">
    <property type="protein sequence ID" value="AAA51596.1"/>
    <property type="status" value="JOINED"/>
    <property type="molecule type" value="Genomic_DNA"/>
</dbReference>
<dbReference type="EMBL" id="M81116">
    <property type="protein sequence ID" value="AAA51596.1"/>
    <property type="status" value="JOINED"/>
    <property type="molecule type" value="Genomic_DNA"/>
</dbReference>
<dbReference type="EMBL" id="M81117">
    <property type="protein sequence ID" value="AAA51596.1"/>
    <property type="status" value="JOINED"/>
    <property type="molecule type" value="Genomic_DNA"/>
</dbReference>
<dbReference type="EMBL" id="CR541689">
    <property type="protein sequence ID" value="CAG46490.1"/>
    <property type="molecule type" value="mRNA"/>
</dbReference>
<dbReference type="EMBL" id="BT019832">
    <property type="protein sequence ID" value="AAV38635.1"/>
    <property type="molecule type" value="mRNA"/>
</dbReference>
<dbReference type="EMBL" id="AY987960">
    <property type="protein sequence ID" value="AAX81412.1"/>
    <property type="molecule type" value="Genomic_DNA"/>
</dbReference>
<dbReference type="EMBL" id="BC014665">
    <property type="protein sequence ID" value="AAH14665.1"/>
    <property type="molecule type" value="mRNA"/>
</dbReference>
<dbReference type="CCDS" id="CCDS47111.1"/>
<dbReference type="PIR" id="JH0789">
    <property type="entry name" value="DEHUC2"/>
</dbReference>
<dbReference type="RefSeq" id="NP_000662.3">
    <property type="nucleotide sequence ID" value="NM_000671.4"/>
</dbReference>
<dbReference type="PDB" id="1M6H">
    <property type="method" value="X-ray"/>
    <property type="resolution" value="2.00 A"/>
    <property type="chains" value="A/B=2-374"/>
</dbReference>
<dbReference type="PDB" id="1M6W">
    <property type="method" value="X-ray"/>
    <property type="resolution" value="2.30 A"/>
    <property type="chains" value="A/B=2-374"/>
</dbReference>
<dbReference type="PDB" id="1MA0">
    <property type="method" value="X-ray"/>
    <property type="resolution" value="2.30 A"/>
    <property type="chains" value="A/B=2-374"/>
</dbReference>
<dbReference type="PDB" id="1MC5">
    <property type="method" value="X-ray"/>
    <property type="resolution" value="2.60 A"/>
    <property type="chains" value="A/B=1-374"/>
</dbReference>
<dbReference type="PDB" id="1MP0">
    <property type="method" value="X-ray"/>
    <property type="resolution" value="2.20 A"/>
    <property type="chains" value="A/B=2-374"/>
</dbReference>
<dbReference type="PDB" id="1TEH">
    <property type="method" value="X-ray"/>
    <property type="resolution" value="2.70 A"/>
    <property type="chains" value="A/B=2-374"/>
</dbReference>
<dbReference type="PDB" id="2FZE">
    <property type="method" value="X-ray"/>
    <property type="resolution" value="1.90 A"/>
    <property type="chains" value="A/B=2-374"/>
</dbReference>
<dbReference type="PDB" id="2FZW">
    <property type="method" value="X-ray"/>
    <property type="resolution" value="1.84 A"/>
    <property type="chains" value="A/B=2-374"/>
</dbReference>
<dbReference type="PDB" id="3QJ5">
    <property type="method" value="X-ray"/>
    <property type="resolution" value="1.90 A"/>
    <property type="chains" value="A/B=2-374"/>
</dbReference>
<dbReference type="PDB" id="8GV3">
    <property type="method" value="EM"/>
    <property type="resolution" value="3.05 A"/>
    <property type="chains" value="A/B=1-374"/>
</dbReference>
<dbReference type="PDBsum" id="1M6H"/>
<dbReference type="PDBsum" id="1M6W"/>
<dbReference type="PDBsum" id="1MA0"/>
<dbReference type="PDBsum" id="1MC5"/>
<dbReference type="PDBsum" id="1MP0"/>
<dbReference type="PDBsum" id="1TEH"/>
<dbReference type="PDBsum" id="2FZE"/>
<dbReference type="PDBsum" id="2FZW"/>
<dbReference type="PDBsum" id="3QJ5"/>
<dbReference type="PDBsum" id="8GV3"/>
<dbReference type="EMDB" id="EMD-34282"/>
<dbReference type="SMR" id="P11766"/>
<dbReference type="BioGRID" id="106640">
    <property type="interactions" value="59"/>
</dbReference>
<dbReference type="FunCoup" id="P11766">
    <property type="interactions" value="1582"/>
</dbReference>
<dbReference type="IntAct" id="P11766">
    <property type="interactions" value="18"/>
</dbReference>
<dbReference type="MINT" id="P11766"/>
<dbReference type="STRING" id="9606.ENSP00000296412"/>
<dbReference type="BindingDB" id="P11766"/>
<dbReference type="ChEMBL" id="CHEMBL4116"/>
<dbReference type="DrugBank" id="DB03704">
    <property type="generic name" value="12-Hydroxydodecanoic Acid"/>
</dbReference>
<dbReference type="DrugBank" id="DB00898">
    <property type="generic name" value="Ethanol"/>
</dbReference>
<dbReference type="DrugBank" id="DB01020">
    <property type="generic name" value="Isosorbide mononitrate"/>
</dbReference>
<dbReference type="DrugBank" id="DB03017">
    <property type="generic name" value="Lauric acid"/>
</dbReference>
<dbReference type="DrugBank" id="DB00157">
    <property type="generic name" value="NADH"/>
</dbReference>
<dbReference type="DrugBank" id="DB12612">
    <property type="generic name" value="Ozanimod"/>
</dbReference>
<dbReference type="DrugBank" id="DB11077">
    <property type="generic name" value="Polyethylene glycol 400"/>
</dbReference>
<dbReference type="DrugBank" id="DB04153">
    <property type="generic name" value="S-Hydroxymethyl Glutathione"/>
</dbReference>
<dbReference type="SwissLipids" id="SLP:000000500"/>
<dbReference type="CarbonylDB" id="P11766"/>
<dbReference type="GlyGen" id="P11766">
    <property type="glycosylation" value="1 site, 1 O-linked glycan (1 site)"/>
</dbReference>
<dbReference type="iPTMnet" id="P11766"/>
<dbReference type="MetOSite" id="P11766"/>
<dbReference type="PhosphoSitePlus" id="P11766"/>
<dbReference type="SwissPalm" id="P11766"/>
<dbReference type="BioMuta" id="ADH5"/>
<dbReference type="DMDM" id="113408"/>
<dbReference type="REPRODUCTION-2DPAGE" id="IPI00746777"/>
<dbReference type="jPOST" id="P11766"/>
<dbReference type="MassIVE" id="P11766"/>
<dbReference type="PaxDb" id="9606-ENSP00000296412"/>
<dbReference type="PeptideAtlas" id="P11766"/>
<dbReference type="ProteomicsDB" id="52803"/>
<dbReference type="Pumba" id="P11766"/>
<dbReference type="Antibodypedia" id="25845">
    <property type="antibodies" value="445 antibodies from 36 providers"/>
</dbReference>
<dbReference type="DNASU" id="128"/>
<dbReference type="Ensembl" id="ENST00000296412.14">
    <property type="protein sequence ID" value="ENSP00000296412.8"/>
    <property type="gene ID" value="ENSG00000197894.12"/>
</dbReference>
<dbReference type="GeneID" id="128"/>
<dbReference type="KEGG" id="hsa:128"/>
<dbReference type="MANE-Select" id="ENST00000296412.14">
    <property type="protein sequence ID" value="ENSP00000296412.8"/>
    <property type="RefSeq nucleotide sequence ID" value="NM_000671.4"/>
    <property type="RefSeq protein sequence ID" value="NP_000662.3"/>
</dbReference>
<dbReference type="AGR" id="HGNC:253"/>
<dbReference type="CTD" id="128"/>
<dbReference type="DisGeNET" id="128"/>
<dbReference type="GeneCards" id="ADH5"/>
<dbReference type="HGNC" id="HGNC:253">
    <property type="gene designation" value="ADH5"/>
</dbReference>
<dbReference type="HPA" id="ENSG00000197894">
    <property type="expression patterns" value="Low tissue specificity"/>
</dbReference>
<dbReference type="MalaCards" id="ADH5"/>
<dbReference type="MIM" id="103710">
    <property type="type" value="gene"/>
</dbReference>
<dbReference type="MIM" id="619151">
    <property type="type" value="phenotype"/>
</dbReference>
<dbReference type="neXtProt" id="NX_P11766"/>
<dbReference type="OpenTargets" id="ENSG00000197894"/>
<dbReference type="PharmGKB" id="PA24574"/>
<dbReference type="VEuPathDB" id="HostDB:ENSG00000197894"/>
<dbReference type="eggNOG" id="KOG0022">
    <property type="taxonomic scope" value="Eukaryota"/>
</dbReference>
<dbReference type="GeneTree" id="ENSGT00940000155196"/>
<dbReference type="HOGENOM" id="CLU_026673_14_0_1"/>
<dbReference type="InParanoid" id="P11766"/>
<dbReference type="OMA" id="IKGRSEM"/>
<dbReference type="OrthoDB" id="417550at2759"/>
<dbReference type="PAN-GO" id="P11766">
    <property type="GO annotations" value="5 GO annotations based on evolutionary models"/>
</dbReference>
<dbReference type="PhylomeDB" id="P11766"/>
<dbReference type="TreeFam" id="TF300429"/>
<dbReference type="BioCyc" id="MetaCyc:HS10601-MONOMER"/>
<dbReference type="PathwayCommons" id="P11766"/>
<dbReference type="Reactome" id="R-HSA-71384">
    <property type="pathway name" value="Ethanol oxidation"/>
</dbReference>
<dbReference type="SABIO-RK" id="P11766"/>
<dbReference type="SignaLink" id="P11766"/>
<dbReference type="BioGRID-ORCS" id="128">
    <property type="hits" value="121 hits in 1159 CRISPR screens"/>
</dbReference>
<dbReference type="ChiTaRS" id="ADH5">
    <property type="organism name" value="human"/>
</dbReference>
<dbReference type="EvolutionaryTrace" id="P11766"/>
<dbReference type="GeneWiki" id="ADH5"/>
<dbReference type="GenomeRNAi" id="128"/>
<dbReference type="Pharos" id="P11766">
    <property type="development level" value="Tchem"/>
</dbReference>
<dbReference type="PRO" id="PR:P11766"/>
<dbReference type="Proteomes" id="UP000005640">
    <property type="component" value="Chromosome 4"/>
</dbReference>
<dbReference type="RNAct" id="P11766">
    <property type="molecule type" value="protein"/>
</dbReference>
<dbReference type="Bgee" id="ENSG00000197894">
    <property type="expression patterns" value="Expressed in mucosa of stomach and 211 other cell types or tissues"/>
</dbReference>
<dbReference type="ExpressionAtlas" id="P11766">
    <property type="expression patterns" value="baseline and differential"/>
</dbReference>
<dbReference type="GO" id="GO:0005829">
    <property type="term" value="C:cytosol"/>
    <property type="evidence" value="ECO:0000318"/>
    <property type="project" value="GO_Central"/>
</dbReference>
<dbReference type="GO" id="GO:0070062">
    <property type="term" value="C:extracellular exosome"/>
    <property type="evidence" value="ECO:0007005"/>
    <property type="project" value="UniProtKB"/>
</dbReference>
<dbReference type="GO" id="GO:0005739">
    <property type="term" value="C:mitochondrion"/>
    <property type="evidence" value="ECO:0007669"/>
    <property type="project" value="Ensembl"/>
</dbReference>
<dbReference type="GO" id="GO:0004022">
    <property type="term" value="F:alcohol dehydrogenase (NAD+) activity"/>
    <property type="evidence" value="ECO:0000318"/>
    <property type="project" value="GO_Central"/>
</dbReference>
<dbReference type="GO" id="GO:0009055">
    <property type="term" value="F:electron transfer activity"/>
    <property type="evidence" value="ECO:0000304"/>
    <property type="project" value="UniProtKB"/>
</dbReference>
<dbReference type="GO" id="GO:0005504">
    <property type="term" value="F:fatty acid binding"/>
    <property type="evidence" value="ECO:0000314"/>
    <property type="project" value="UniProtKB"/>
</dbReference>
<dbReference type="GO" id="GO:0018467">
    <property type="term" value="F:formaldehyde dehydrogenase (NAD+) activity"/>
    <property type="evidence" value="ECO:0000314"/>
    <property type="project" value="UniProtKB"/>
</dbReference>
<dbReference type="GO" id="GO:0042802">
    <property type="term" value="F:identical protein binding"/>
    <property type="evidence" value="ECO:0007669"/>
    <property type="project" value="Ensembl"/>
</dbReference>
<dbReference type="GO" id="GO:0106322">
    <property type="term" value="F:S-(hydroxymethyl)glutathione dehydrogenase (NAD+) activity"/>
    <property type="evidence" value="ECO:0007669"/>
    <property type="project" value="RHEA"/>
</dbReference>
<dbReference type="GO" id="GO:0106321">
    <property type="term" value="F:S-(hydroxymethyl)glutathione dehydrogenase (NADP+) activity"/>
    <property type="evidence" value="ECO:0007669"/>
    <property type="project" value="RHEA"/>
</dbReference>
<dbReference type="GO" id="GO:0051903">
    <property type="term" value="F:S-(hydroxymethyl)glutathione dehydrogenase [NAD(P)+] activity"/>
    <property type="evidence" value="ECO:0000318"/>
    <property type="project" value="GO_Central"/>
</dbReference>
<dbReference type="GO" id="GO:0080007">
    <property type="term" value="F:S-nitrosoglutathione reductase (NADH) activity"/>
    <property type="evidence" value="ECO:0007669"/>
    <property type="project" value="RHEA"/>
</dbReference>
<dbReference type="GO" id="GO:0008270">
    <property type="term" value="F:zinc ion binding"/>
    <property type="evidence" value="ECO:0000314"/>
    <property type="project" value="UniProtKB"/>
</dbReference>
<dbReference type="GO" id="GO:0010430">
    <property type="term" value="P:fatty acid omega-oxidation"/>
    <property type="evidence" value="ECO:0000314"/>
    <property type="project" value="UniProtKB"/>
</dbReference>
<dbReference type="GO" id="GO:0046294">
    <property type="term" value="P:formaldehyde catabolic process"/>
    <property type="evidence" value="ECO:0000318"/>
    <property type="project" value="GO_Central"/>
</dbReference>
<dbReference type="GO" id="GO:0045777">
    <property type="term" value="P:positive regulation of blood pressure"/>
    <property type="evidence" value="ECO:0007669"/>
    <property type="project" value="Ensembl"/>
</dbReference>
<dbReference type="GO" id="GO:0003016">
    <property type="term" value="P:respiratory system process"/>
    <property type="evidence" value="ECO:0007669"/>
    <property type="project" value="Ensembl"/>
</dbReference>
<dbReference type="GO" id="GO:0032496">
    <property type="term" value="P:response to lipopolysaccharide"/>
    <property type="evidence" value="ECO:0007669"/>
    <property type="project" value="Ensembl"/>
</dbReference>
<dbReference type="GO" id="GO:0051409">
    <property type="term" value="P:response to nitrosative stress"/>
    <property type="evidence" value="ECO:0007669"/>
    <property type="project" value="Ensembl"/>
</dbReference>
<dbReference type="GO" id="GO:0051775">
    <property type="term" value="P:response to redox state"/>
    <property type="evidence" value="ECO:0000314"/>
    <property type="project" value="UniProtKB"/>
</dbReference>
<dbReference type="GO" id="GO:0001523">
    <property type="term" value="P:retinoid metabolic process"/>
    <property type="evidence" value="ECO:0007669"/>
    <property type="project" value="Ensembl"/>
</dbReference>
<dbReference type="CDD" id="cd08300">
    <property type="entry name" value="alcohol_DH_class_III"/>
    <property type="match status" value="1"/>
</dbReference>
<dbReference type="FunFam" id="3.40.50.720:FF:000003">
    <property type="entry name" value="S-(hydroxymethyl)glutathione dehydrogenase"/>
    <property type="match status" value="1"/>
</dbReference>
<dbReference type="FunFam" id="3.90.180.10:FF:000001">
    <property type="entry name" value="S-(hydroxymethyl)glutathione dehydrogenase"/>
    <property type="match status" value="1"/>
</dbReference>
<dbReference type="Gene3D" id="3.90.180.10">
    <property type="entry name" value="Medium-chain alcohol dehydrogenases, catalytic domain"/>
    <property type="match status" value="1"/>
</dbReference>
<dbReference type="Gene3D" id="3.40.50.720">
    <property type="entry name" value="NAD(P)-binding Rossmann-like Domain"/>
    <property type="match status" value="1"/>
</dbReference>
<dbReference type="InterPro" id="IPR013149">
    <property type="entry name" value="ADH-like_C"/>
</dbReference>
<dbReference type="InterPro" id="IPR013154">
    <property type="entry name" value="ADH-like_N"/>
</dbReference>
<dbReference type="InterPro" id="IPR014183">
    <property type="entry name" value="ADH_3"/>
</dbReference>
<dbReference type="InterPro" id="IPR002328">
    <property type="entry name" value="ADH_Zn_CS"/>
</dbReference>
<dbReference type="InterPro" id="IPR011032">
    <property type="entry name" value="GroES-like_sf"/>
</dbReference>
<dbReference type="InterPro" id="IPR036291">
    <property type="entry name" value="NAD(P)-bd_dom_sf"/>
</dbReference>
<dbReference type="NCBIfam" id="TIGR02818">
    <property type="entry name" value="adh_III_F_hyde"/>
    <property type="match status" value="1"/>
</dbReference>
<dbReference type="PANTHER" id="PTHR43880">
    <property type="entry name" value="ALCOHOL DEHYDROGENASE"/>
    <property type="match status" value="1"/>
</dbReference>
<dbReference type="PANTHER" id="PTHR43880:SF4">
    <property type="entry name" value="ALCOHOL DEHYDROGENASE CLASS-3"/>
    <property type="match status" value="1"/>
</dbReference>
<dbReference type="Pfam" id="PF08240">
    <property type="entry name" value="ADH_N"/>
    <property type="match status" value="1"/>
</dbReference>
<dbReference type="Pfam" id="PF00107">
    <property type="entry name" value="ADH_zinc_N"/>
    <property type="match status" value="1"/>
</dbReference>
<dbReference type="SUPFAM" id="SSF50129">
    <property type="entry name" value="GroES-like"/>
    <property type="match status" value="2"/>
</dbReference>
<dbReference type="SUPFAM" id="SSF51735">
    <property type="entry name" value="NAD(P)-binding Rossmann-fold domains"/>
    <property type="match status" value="1"/>
</dbReference>
<dbReference type="PROSITE" id="PS00059">
    <property type="entry name" value="ADH_ZINC"/>
    <property type="match status" value="1"/>
</dbReference>
<name>ADHX_HUMAN</name>
<protein>
    <recommendedName>
        <fullName evidence="9">Alcohol dehydrogenase class-3</fullName>
        <ecNumber evidence="5">1.1.1.1</ecNumber>
    </recommendedName>
    <alternativeName>
        <fullName>Alcohol dehydrogenase 5</fullName>
    </alternativeName>
    <alternativeName>
        <fullName>Alcohol dehydrogenase class chi chain</fullName>
    </alternativeName>
    <alternativeName>
        <fullName>Alcohol dehydrogenase class-III</fullName>
    </alternativeName>
    <alternativeName>
        <fullName>Glutathione-dependent formaldehyde dehydrogenase</fullName>
        <shortName>FALDH</shortName>
        <shortName>FDH</shortName>
        <shortName>GSH-FDH</shortName>
        <ecNumber>1.1.1.-</ecNumber>
    </alternativeName>
    <alternativeName>
        <fullName>S-(hydroxymethyl)glutathione dehydrogenase</fullName>
        <ecNumber evidence="5">1.1.1.284</ecNumber>
    </alternativeName>
</protein>
<evidence type="ECO:0000250" key="1">
    <source>
        <dbReference type="UniProtKB" id="P28474"/>
    </source>
</evidence>
<evidence type="ECO:0000269" key="2">
    <source>
    </source>
</evidence>
<evidence type="ECO:0000269" key="3">
    <source>
    </source>
</evidence>
<evidence type="ECO:0000269" key="4">
    <source>
    </source>
</evidence>
<evidence type="ECO:0000269" key="5">
    <source>
    </source>
</evidence>
<evidence type="ECO:0000269" key="6">
    <source>
    </source>
</evidence>
<evidence type="ECO:0000269" key="7">
    <source>
    </source>
</evidence>
<evidence type="ECO:0000269" key="8">
    <source ref="6"/>
</evidence>
<evidence type="ECO:0000305" key="9"/>
<evidence type="ECO:0000305" key="10">
    <source>
    </source>
</evidence>
<evidence type="ECO:0000312" key="11">
    <source>
        <dbReference type="HGNC" id="HGNC:253"/>
    </source>
</evidence>
<evidence type="ECO:0007744" key="12">
    <source>
    </source>
</evidence>
<evidence type="ECO:0007744" key="13">
    <source>
    </source>
</evidence>
<evidence type="ECO:0007744" key="14">
    <source>
    </source>
</evidence>
<evidence type="ECO:0007829" key="15">
    <source>
        <dbReference type="PDB" id="2FZW"/>
    </source>
</evidence>
<evidence type="ECO:0007829" key="16">
    <source>
        <dbReference type="PDB" id="3QJ5"/>
    </source>
</evidence>
<keyword id="KW-0002">3D-structure</keyword>
<keyword id="KW-0007">Acetylation</keyword>
<keyword id="KW-0963">Cytoplasm</keyword>
<keyword id="KW-0903">Direct protein sequencing</keyword>
<keyword id="KW-0225">Disease variant</keyword>
<keyword id="KW-0242">Dwarfism</keyword>
<keyword id="KW-0991">Intellectual disability</keyword>
<keyword id="KW-0443">Lipid metabolism</keyword>
<keyword id="KW-0479">Metal-binding</keyword>
<keyword id="KW-0520">NAD</keyword>
<keyword id="KW-0560">Oxidoreductase</keyword>
<keyword id="KW-0597">Phosphoprotein</keyword>
<keyword id="KW-1267">Proteomics identification</keyword>
<keyword id="KW-1185">Reference proteome</keyword>
<keyword id="KW-0862">Zinc</keyword>
<gene>
    <name evidence="11" type="primary">ADH5</name>
    <name type="synonym">ADHX</name>
    <name type="synonym">FDH</name>
</gene>
<proteinExistence type="evidence at protein level"/>